<dbReference type="EC" id="2.3.1.234" evidence="1"/>
<dbReference type="EMBL" id="CP000300">
    <property type="protein sequence ID" value="ABE52119.1"/>
    <property type="molecule type" value="Genomic_DNA"/>
</dbReference>
<dbReference type="RefSeq" id="WP_011499265.1">
    <property type="nucleotide sequence ID" value="NC_007955.1"/>
</dbReference>
<dbReference type="SMR" id="Q12WQ7"/>
<dbReference type="STRING" id="259564.Mbur_1196"/>
<dbReference type="GeneID" id="3998352"/>
<dbReference type="KEGG" id="mbu:Mbur_1196"/>
<dbReference type="HOGENOM" id="CLU_023208_2_2_2"/>
<dbReference type="OrthoDB" id="6818at2157"/>
<dbReference type="Proteomes" id="UP000001979">
    <property type="component" value="Chromosome"/>
</dbReference>
<dbReference type="GO" id="GO:0005737">
    <property type="term" value="C:cytoplasm"/>
    <property type="evidence" value="ECO:0007669"/>
    <property type="project" value="UniProtKB-SubCell"/>
</dbReference>
<dbReference type="GO" id="GO:0000408">
    <property type="term" value="C:EKC/KEOPS complex"/>
    <property type="evidence" value="ECO:0007669"/>
    <property type="project" value="InterPro"/>
</dbReference>
<dbReference type="GO" id="GO:0005506">
    <property type="term" value="F:iron ion binding"/>
    <property type="evidence" value="ECO:0007669"/>
    <property type="project" value="UniProtKB-UniRule"/>
</dbReference>
<dbReference type="GO" id="GO:0061711">
    <property type="term" value="F:N(6)-L-threonylcarbamoyladenine synthase activity"/>
    <property type="evidence" value="ECO:0007669"/>
    <property type="project" value="UniProtKB-EC"/>
</dbReference>
<dbReference type="GO" id="GO:0002949">
    <property type="term" value="P:tRNA threonylcarbamoyladenosine modification"/>
    <property type="evidence" value="ECO:0007669"/>
    <property type="project" value="UniProtKB-UniRule"/>
</dbReference>
<dbReference type="CDD" id="cd24131">
    <property type="entry name" value="ASKHA_NBD_Kae1_arch_bac"/>
    <property type="match status" value="1"/>
</dbReference>
<dbReference type="FunFam" id="3.30.420.40:FF:000038">
    <property type="entry name" value="Probable tRNA N6-adenosine threonylcarbamoyltransferase"/>
    <property type="match status" value="1"/>
</dbReference>
<dbReference type="Gene3D" id="3.30.420.40">
    <property type="match status" value="2"/>
</dbReference>
<dbReference type="HAMAP" id="MF_01446">
    <property type="entry name" value="Kae1"/>
    <property type="match status" value="1"/>
</dbReference>
<dbReference type="InterPro" id="IPR043129">
    <property type="entry name" value="ATPase_NBD"/>
</dbReference>
<dbReference type="InterPro" id="IPR000905">
    <property type="entry name" value="Gcp-like_dom"/>
</dbReference>
<dbReference type="InterPro" id="IPR017861">
    <property type="entry name" value="KAE1/TsaD"/>
</dbReference>
<dbReference type="InterPro" id="IPR034680">
    <property type="entry name" value="Kae1_archaea_euk"/>
</dbReference>
<dbReference type="InterPro" id="IPR017860">
    <property type="entry name" value="Peptidase_M22_CS"/>
</dbReference>
<dbReference type="NCBIfam" id="TIGR03722">
    <property type="entry name" value="arch_KAE1"/>
    <property type="match status" value="1"/>
</dbReference>
<dbReference type="NCBIfam" id="TIGR00329">
    <property type="entry name" value="gcp_kae1"/>
    <property type="match status" value="1"/>
</dbReference>
<dbReference type="NCBIfam" id="NF007174">
    <property type="entry name" value="PRK09605.1"/>
    <property type="match status" value="1"/>
</dbReference>
<dbReference type="PANTHER" id="PTHR11735">
    <property type="entry name" value="TRNA N6-ADENOSINE THREONYLCARBAMOYLTRANSFERASE"/>
    <property type="match status" value="1"/>
</dbReference>
<dbReference type="PANTHER" id="PTHR11735:SF14">
    <property type="entry name" value="TRNA N6-ADENOSINE THREONYLCARBAMOYLTRANSFERASE"/>
    <property type="match status" value="1"/>
</dbReference>
<dbReference type="Pfam" id="PF00814">
    <property type="entry name" value="TsaD"/>
    <property type="match status" value="1"/>
</dbReference>
<dbReference type="PRINTS" id="PR00789">
    <property type="entry name" value="OSIALOPTASE"/>
</dbReference>
<dbReference type="SUPFAM" id="SSF53067">
    <property type="entry name" value="Actin-like ATPase domain"/>
    <property type="match status" value="1"/>
</dbReference>
<dbReference type="PROSITE" id="PS01016">
    <property type="entry name" value="GLYCOPROTEASE"/>
    <property type="match status" value="1"/>
</dbReference>
<comment type="function">
    <text evidence="1">Required for the formation of a threonylcarbamoyl group on adenosine at position 37 (t(6)A37) in tRNAs that read codons beginning with adenine. Is a component of the KEOPS complex that is probably involved in the transfer of the threonylcarbamoyl moiety of threonylcarbamoyl-AMP (TC-AMP) to the N6 group of A37. Kae1 likely plays a direct catalytic role in this reaction, but requires other protein(s) of the complex to fulfill this activity.</text>
</comment>
<comment type="catalytic activity">
    <reaction evidence="1">
        <text>L-threonylcarbamoyladenylate + adenosine(37) in tRNA = N(6)-L-threonylcarbamoyladenosine(37) in tRNA + AMP + H(+)</text>
        <dbReference type="Rhea" id="RHEA:37059"/>
        <dbReference type="Rhea" id="RHEA-COMP:10162"/>
        <dbReference type="Rhea" id="RHEA-COMP:10163"/>
        <dbReference type="ChEBI" id="CHEBI:15378"/>
        <dbReference type="ChEBI" id="CHEBI:73682"/>
        <dbReference type="ChEBI" id="CHEBI:74411"/>
        <dbReference type="ChEBI" id="CHEBI:74418"/>
        <dbReference type="ChEBI" id="CHEBI:456215"/>
        <dbReference type="EC" id="2.3.1.234"/>
    </reaction>
</comment>
<comment type="cofactor">
    <cofactor evidence="1">
        <name>Fe(2+)</name>
        <dbReference type="ChEBI" id="CHEBI:29033"/>
    </cofactor>
    <text evidence="1">Binds 1 Fe(2+) ion per subunit.</text>
</comment>
<comment type="subunit">
    <text evidence="1">Monomer. Component of the KEOPS complex that consists of Kae1, Bud32, Cgi121 and Pcc1; the whole complex dimerizes.</text>
</comment>
<comment type="subcellular location">
    <subcellularLocation>
        <location evidence="1">Cytoplasm</location>
    </subcellularLocation>
</comment>
<comment type="similarity">
    <text evidence="1">Belongs to the KAE1 / TsaD family.</text>
</comment>
<evidence type="ECO:0000255" key="1">
    <source>
        <dbReference type="HAMAP-Rule" id="MF_01446"/>
    </source>
</evidence>
<sequence length="335" mass="36222">MTTVLGIEGTAWNLSAAIVDEDDVIAEVTETYRPKTGGIHPREAAQHHALHASDVIERLLKEYRDKGHSPENIDAIAFSQGPGLGACLRTVATSARALALSLDIPLVGVNHCIGHVEIGRWKTPAVDPVVLYVSGGNSQVLAHRAGKYRIFGETLDIGIGNALDKFARGAGLTHPGGPKVEEYARKATNYVKMPYVVKGMDFSFSGLSTAATDALKDNSLEDVCYSFQENAFAMLVEVTERALAHTGKSEVLLAGGVGANMRLREMLDLMCEDRGASFYVPERRFMGDNGAMIAYTGLLMFNSGTTLPIENSHVDPSFRPDTVDVTWIADEKEVL</sequence>
<proteinExistence type="inferred from homology"/>
<organism>
    <name type="scientific">Methanococcoides burtonii (strain DSM 6242 / NBRC 107633 / OCM 468 / ACE-M)</name>
    <dbReference type="NCBI Taxonomy" id="259564"/>
    <lineage>
        <taxon>Archaea</taxon>
        <taxon>Methanobacteriati</taxon>
        <taxon>Methanobacteriota</taxon>
        <taxon>Stenosarchaea group</taxon>
        <taxon>Methanomicrobia</taxon>
        <taxon>Methanosarcinales</taxon>
        <taxon>Methanosarcinaceae</taxon>
        <taxon>Methanococcoides</taxon>
    </lineage>
</organism>
<protein>
    <recommendedName>
        <fullName evidence="1">tRNA N6-adenosine threonylcarbamoyltransferase</fullName>
        <ecNumber evidence="1">2.3.1.234</ecNumber>
    </recommendedName>
    <alternativeName>
        <fullName evidence="1">N6-L-threonylcarbamoyladenine synthase</fullName>
        <shortName evidence="1">t(6)A synthase</shortName>
    </alternativeName>
    <alternativeName>
        <fullName evidence="1">t(6)A37 threonylcarbamoyladenosine biosynthesis protein Kae1</fullName>
    </alternativeName>
    <alternativeName>
        <fullName evidence="1">tRNA threonylcarbamoyladenosine biosynthesis protein Kae1</fullName>
    </alternativeName>
</protein>
<gene>
    <name evidence="1" type="primary">kae1</name>
    <name type="ordered locus">Mbur_1196</name>
</gene>
<reference key="1">
    <citation type="journal article" date="2009" name="ISME J.">
        <title>The genome sequence of the psychrophilic archaeon, Methanococcoides burtonii: the role of genome evolution in cold adaptation.</title>
        <authorList>
            <person name="Allen M.A."/>
            <person name="Lauro F.M."/>
            <person name="Williams T.J."/>
            <person name="Burg D."/>
            <person name="Siddiqui K.S."/>
            <person name="De Francisci D."/>
            <person name="Chong K.W."/>
            <person name="Pilak O."/>
            <person name="Chew H.H."/>
            <person name="De Maere M.Z."/>
            <person name="Ting L."/>
            <person name="Katrib M."/>
            <person name="Ng C."/>
            <person name="Sowers K.R."/>
            <person name="Galperin M.Y."/>
            <person name="Anderson I.J."/>
            <person name="Ivanova N."/>
            <person name="Dalin E."/>
            <person name="Martinez M."/>
            <person name="Lapidus A."/>
            <person name="Hauser L."/>
            <person name="Land M."/>
            <person name="Thomas T."/>
            <person name="Cavicchioli R."/>
        </authorList>
    </citation>
    <scope>NUCLEOTIDE SEQUENCE [LARGE SCALE GENOMIC DNA]</scope>
    <source>
        <strain>DSM 6242 / NBRC 107633 / OCM 468 / ACE-M</strain>
    </source>
</reference>
<name>KAE1_METBU</name>
<accession>Q12WQ7</accession>
<feature type="chain" id="PRO_0000303633" description="tRNA N6-adenosine threonylcarbamoyltransferase">
    <location>
        <begin position="1"/>
        <end position="335"/>
    </location>
</feature>
<feature type="binding site" evidence="1">
    <location>
        <position position="111"/>
    </location>
    <ligand>
        <name>Fe cation</name>
        <dbReference type="ChEBI" id="CHEBI:24875"/>
    </ligand>
</feature>
<feature type="binding site" evidence="1">
    <location>
        <position position="115"/>
    </location>
    <ligand>
        <name>Fe cation</name>
        <dbReference type="ChEBI" id="CHEBI:24875"/>
    </ligand>
</feature>
<feature type="binding site" evidence="1">
    <location>
        <begin position="132"/>
        <end position="136"/>
    </location>
    <ligand>
        <name>substrate</name>
    </ligand>
</feature>
<feature type="binding site" evidence="1">
    <location>
        <position position="132"/>
    </location>
    <ligand>
        <name>Fe cation</name>
        <dbReference type="ChEBI" id="CHEBI:24875"/>
    </ligand>
</feature>
<feature type="binding site" evidence="1">
    <location>
        <position position="164"/>
    </location>
    <ligand>
        <name>substrate</name>
    </ligand>
</feature>
<feature type="binding site" evidence="1">
    <location>
        <position position="177"/>
    </location>
    <ligand>
        <name>substrate</name>
    </ligand>
</feature>
<feature type="binding site" evidence="1">
    <location>
        <position position="181"/>
    </location>
    <ligand>
        <name>substrate</name>
    </ligand>
</feature>
<feature type="binding site" evidence="1">
    <location>
        <position position="260"/>
    </location>
    <ligand>
        <name>substrate</name>
    </ligand>
</feature>
<feature type="binding site" evidence="1">
    <location>
        <position position="288"/>
    </location>
    <ligand>
        <name>Fe cation</name>
        <dbReference type="ChEBI" id="CHEBI:24875"/>
    </ligand>
</feature>
<keyword id="KW-0012">Acyltransferase</keyword>
<keyword id="KW-0963">Cytoplasm</keyword>
<keyword id="KW-0408">Iron</keyword>
<keyword id="KW-0479">Metal-binding</keyword>
<keyword id="KW-0808">Transferase</keyword>
<keyword id="KW-0819">tRNA processing</keyword>